<accession>Q3YZN2</accession>
<feature type="chain" id="PRO_0000256335" description="Chorismate synthase">
    <location>
        <begin position="1"/>
        <end position="361"/>
    </location>
</feature>
<feature type="binding site" evidence="1">
    <location>
        <position position="48"/>
    </location>
    <ligand>
        <name>NADP(+)</name>
        <dbReference type="ChEBI" id="CHEBI:58349"/>
    </ligand>
</feature>
<feature type="binding site" evidence="1">
    <location>
        <position position="54"/>
    </location>
    <ligand>
        <name>NADP(+)</name>
        <dbReference type="ChEBI" id="CHEBI:58349"/>
    </ligand>
</feature>
<feature type="binding site" evidence="1">
    <location>
        <begin position="125"/>
        <end position="127"/>
    </location>
    <ligand>
        <name>FMN</name>
        <dbReference type="ChEBI" id="CHEBI:58210"/>
    </ligand>
</feature>
<feature type="binding site" evidence="1">
    <location>
        <begin position="238"/>
        <end position="239"/>
    </location>
    <ligand>
        <name>FMN</name>
        <dbReference type="ChEBI" id="CHEBI:58210"/>
    </ligand>
</feature>
<feature type="binding site" evidence="1">
    <location>
        <position position="278"/>
    </location>
    <ligand>
        <name>FMN</name>
        <dbReference type="ChEBI" id="CHEBI:58210"/>
    </ligand>
</feature>
<feature type="binding site" evidence="1">
    <location>
        <begin position="293"/>
        <end position="297"/>
    </location>
    <ligand>
        <name>FMN</name>
        <dbReference type="ChEBI" id="CHEBI:58210"/>
    </ligand>
</feature>
<feature type="binding site" evidence="1">
    <location>
        <position position="319"/>
    </location>
    <ligand>
        <name>FMN</name>
        <dbReference type="ChEBI" id="CHEBI:58210"/>
    </ligand>
</feature>
<evidence type="ECO:0000255" key="1">
    <source>
        <dbReference type="HAMAP-Rule" id="MF_00300"/>
    </source>
</evidence>
<keyword id="KW-0028">Amino-acid biosynthesis</keyword>
<keyword id="KW-0057">Aromatic amino acid biosynthesis</keyword>
<keyword id="KW-0274">FAD</keyword>
<keyword id="KW-0285">Flavoprotein</keyword>
<keyword id="KW-0288">FMN</keyword>
<keyword id="KW-0456">Lyase</keyword>
<keyword id="KW-0521">NADP</keyword>
<keyword id="KW-1185">Reference proteome</keyword>
<name>AROC_SHISS</name>
<reference key="1">
    <citation type="journal article" date="2005" name="Nucleic Acids Res.">
        <title>Genome dynamics and diversity of Shigella species, the etiologic agents of bacillary dysentery.</title>
        <authorList>
            <person name="Yang F."/>
            <person name="Yang J."/>
            <person name="Zhang X."/>
            <person name="Chen L."/>
            <person name="Jiang Y."/>
            <person name="Yan Y."/>
            <person name="Tang X."/>
            <person name="Wang J."/>
            <person name="Xiong Z."/>
            <person name="Dong J."/>
            <person name="Xue Y."/>
            <person name="Zhu Y."/>
            <person name="Xu X."/>
            <person name="Sun L."/>
            <person name="Chen S."/>
            <person name="Nie H."/>
            <person name="Peng J."/>
            <person name="Xu J."/>
            <person name="Wang Y."/>
            <person name="Yuan Z."/>
            <person name="Wen Y."/>
            <person name="Yao Z."/>
            <person name="Shen Y."/>
            <person name="Qiang B."/>
            <person name="Hou Y."/>
            <person name="Yu J."/>
            <person name="Jin Q."/>
        </authorList>
    </citation>
    <scope>NUCLEOTIDE SEQUENCE [LARGE SCALE GENOMIC DNA]</scope>
    <source>
        <strain>Ss046</strain>
    </source>
</reference>
<proteinExistence type="inferred from homology"/>
<comment type="function">
    <text evidence="1">Catalyzes the anti-1,4-elimination of the C-3 phosphate and the C-6 proR hydrogen from 5-enolpyruvylshikimate-3-phosphate (EPSP) to yield chorismate, which is the branch point compound that serves as the starting substrate for the three terminal pathways of aromatic amino acid biosynthesis. This reaction introduces a second double bond into the aromatic ring system.</text>
</comment>
<comment type="catalytic activity">
    <reaction evidence="1">
        <text>5-O-(1-carboxyvinyl)-3-phosphoshikimate = chorismate + phosphate</text>
        <dbReference type="Rhea" id="RHEA:21020"/>
        <dbReference type="ChEBI" id="CHEBI:29748"/>
        <dbReference type="ChEBI" id="CHEBI:43474"/>
        <dbReference type="ChEBI" id="CHEBI:57701"/>
        <dbReference type="EC" id="4.2.3.5"/>
    </reaction>
</comment>
<comment type="cofactor">
    <cofactor evidence="1">
        <name>FMNH2</name>
        <dbReference type="ChEBI" id="CHEBI:57618"/>
    </cofactor>
    <text evidence="1">Reduced FMN (FMNH(2)).</text>
</comment>
<comment type="pathway">
    <text evidence="1">Metabolic intermediate biosynthesis; chorismate biosynthesis; chorismate from D-erythrose 4-phosphate and phosphoenolpyruvate: step 7/7.</text>
</comment>
<comment type="subunit">
    <text evidence="1">Homotetramer.</text>
</comment>
<comment type="similarity">
    <text evidence="1">Belongs to the chorismate synthase family.</text>
</comment>
<organism>
    <name type="scientific">Shigella sonnei (strain Ss046)</name>
    <dbReference type="NCBI Taxonomy" id="300269"/>
    <lineage>
        <taxon>Bacteria</taxon>
        <taxon>Pseudomonadati</taxon>
        <taxon>Pseudomonadota</taxon>
        <taxon>Gammaproteobacteria</taxon>
        <taxon>Enterobacterales</taxon>
        <taxon>Enterobacteriaceae</taxon>
        <taxon>Shigella</taxon>
    </lineage>
</organism>
<sequence length="361" mass="39137">MAGNTIGQLFRVTTFGESHGLALGCIVDGVPPGIPLTEADLQHDLDRRRPGTSRYTTQRREPDQVKILSGVFEGVTTGTSIGLLIENTDQRSQDYSAIKDVFRPGHADYTYEQKYGLRDYRGGGRSSARETAMRVAAGAIAKKYLAEKFGIEIRGCLTQMGDIPLEIKDWSLVEQNPFFCPDPDKIDALDELMRALKKEGDSIGAKVTVVASGVPAGLGEPVFDRLDADIAHALMSINAVKGVEIGDGFDVVALRGSQNRDEITKDGFQSNHAGGILGGISSGQQIIAHMALKPTSSITVPGRTINRFGEEVEMITKGRHDPCVGIRAVPIAEAMLAIVLMDHLLRQRAQNADVKTDIPRW</sequence>
<dbReference type="EC" id="4.2.3.5" evidence="1"/>
<dbReference type="EMBL" id="CP000038">
    <property type="protein sequence ID" value="AAZ89030.1"/>
    <property type="molecule type" value="Genomic_DNA"/>
</dbReference>
<dbReference type="RefSeq" id="WP_000918470.1">
    <property type="nucleotide sequence ID" value="NC_007384.1"/>
</dbReference>
<dbReference type="SMR" id="Q3YZN2"/>
<dbReference type="GeneID" id="93774846"/>
<dbReference type="KEGG" id="ssn:SSON_2387"/>
<dbReference type="HOGENOM" id="CLU_034547_0_2_6"/>
<dbReference type="UniPathway" id="UPA00053">
    <property type="reaction ID" value="UER00090"/>
</dbReference>
<dbReference type="Proteomes" id="UP000002529">
    <property type="component" value="Chromosome"/>
</dbReference>
<dbReference type="GO" id="GO:0005829">
    <property type="term" value="C:cytosol"/>
    <property type="evidence" value="ECO:0007669"/>
    <property type="project" value="TreeGrafter"/>
</dbReference>
<dbReference type="GO" id="GO:0004107">
    <property type="term" value="F:chorismate synthase activity"/>
    <property type="evidence" value="ECO:0007669"/>
    <property type="project" value="UniProtKB-UniRule"/>
</dbReference>
<dbReference type="GO" id="GO:0010181">
    <property type="term" value="F:FMN binding"/>
    <property type="evidence" value="ECO:0007669"/>
    <property type="project" value="TreeGrafter"/>
</dbReference>
<dbReference type="GO" id="GO:0008652">
    <property type="term" value="P:amino acid biosynthetic process"/>
    <property type="evidence" value="ECO:0007669"/>
    <property type="project" value="UniProtKB-KW"/>
</dbReference>
<dbReference type="GO" id="GO:0009073">
    <property type="term" value="P:aromatic amino acid family biosynthetic process"/>
    <property type="evidence" value="ECO:0007669"/>
    <property type="project" value="UniProtKB-KW"/>
</dbReference>
<dbReference type="GO" id="GO:0009423">
    <property type="term" value="P:chorismate biosynthetic process"/>
    <property type="evidence" value="ECO:0007669"/>
    <property type="project" value="UniProtKB-UniRule"/>
</dbReference>
<dbReference type="CDD" id="cd07304">
    <property type="entry name" value="Chorismate_synthase"/>
    <property type="match status" value="1"/>
</dbReference>
<dbReference type="FunFam" id="3.60.150.10:FF:000001">
    <property type="entry name" value="Chorismate synthase"/>
    <property type="match status" value="1"/>
</dbReference>
<dbReference type="Gene3D" id="3.60.150.10">
    <property type="entry name" value="Chorismate synthase AroC"/>
    <property type="match status" value="1"/>
</dbReference>
<dbReference type="HAMAP" id="MF_00300">
    <property type="entry name" value="Chorismate_synth"/>
    <property type="match status" value="1"/>
</dbReference>
<dbReference type="InterPro" id="IPR000453">
    <property type="entry name" value="Chorismate_synth"/>
</dbReference>
<dbReference type="InterPro" id="IPR035904">
    <property type="entry name" value="Chorismate_synth_AroC_sf"/>
</dbReference>
<dbReference type="InterPro" id="IPR020541">
    <property type="entry name" value="Chorismate_synthase_CS"/>
</dbReference>
<dbReference type="NCBIfam" id="TIGR00033">
    <property type="entry name" value="aroC"/>
    <property type="match status" value="1"/>
</dbReference>
<dbReference type="NCBIfam" id="NF003793">
    <property type="entry name" value="PRK05382.1"/>
    <property type="match status" value="1"/>
</dbReference>
<dbReference type="PANTHER" id="PTHR21085">
    <property type="entry name" value="CHORISMATE SYNTHASE"/>
    <property type="match status" value="1"/>
</dbReference>
<dbReference type="PANTHER" id="PTHR21085:SF0">
    <property type="entry name" value="CHORISMATE SYNTHASE"/>
    <property type="match status" value="1"/>
</dbReference>
<dbReference type="Pfam" id="PF01264">
    <property type="entry name" value="Chorismate_synt"/>
    <property type="match status" value="1"/>
</dbReference>
<dbReference type="PIRSF" id="PIRSF001456">
    <property type="entry name" value="Chorismate_synth"/>
    <property type="match status" value="1"/>
</dbReference>
<dbReference type="SUPFAM" id="SSF103263">
    <property type="entry name" value="Chorismate synthase, AroC"/>
    <property type="match status" value="1"/>
</dbReference>
<dbReference type="PROSITE" id="PS00787">
    <property type="entry name" value="CHORISMATE_SYNTHASE_1"/>
    <property type="match status" value="1"/>
</dbReference>
<dbReference type="PROSITE" id="PS00788">
    <property type="entry name" value="CHORISMATE_SYNTHASE_2"/>
    <property type="match status" value="1"/>
</dbReference>
<dbReference type="PROSITE" id="PS00789">
    <property type="entry name" value="CHORISMATE_SYNTHASE_3"/>
    <property type="match status" value="1"/>
</dbReference>
<gene>
    <name evidence="1" type="primary">aroC</name>
    <name type="ordered locus">SSON_2387</name>
</gene>
<protein>
    <recommendedName>
        <fullName evidence="1">Chorismate synthase</fullName>
        <shortName evidence="1">CS</shortName>
        <ecNumber evidence="1">4.2.3.5</ecNumber>
    </recommendedName>
    <alternativeName>
        <fullName evidence="1">5-enolpyruvylshikimate-3-phosphate phospholyase</fullName>
    </alternativeName>
</protein>